<accession>Q0ZIZ0</accession>
<gene>
    <name evidence="2" type="primary">psbH</name>
</gene>
<name>PSBH_VITVI</name>
<organism>
    <name type="scientific">Vitis vinifera</name>
    <name type="common">Grape</name>
    <dbReference type="NCBI Taxonomy" id="29760"/>
    <lineage>
        <taxon>Eukaryota</taxon>
        <taxon>Viridiplantae</taxon>
        <taxon>Streptophyta</taxon>
        <taxon>Embryophyta</taxon>
        <taxon>Tracheophyta</taxon>
        <taxon>Spermatophyta</taxon>
        <taxon>Magnoliopsida</taxon>
        <taxon>eudicotyledons</taxon>
        <taxon>Gunneridae</taxon>
        <taxon>Pentapetalae</taxon>
        <taxon>rosids</taxon>
        <taxon>Vitales</taxon>
        <taxon>Vitaceae</taxon>
        <taxon>Viteae</taxon>
        <taxon>Vitis</taxon>
    </lineage>
</organism>
<protein>
    <recommendedName>
        <fullName evidence="2">Photosystem II reaction center protein H</fullName>
        <shortName evidence="2">PSII-H</shortName>
    </recommendedName>
    <alternativeName>
        <fullName evidence="2">Photosystem II 10 kDa phosphoprotein</fullName>
    </alternativeName>
</protein>
<sequence>MATKTVEGSSRSRPKPTTVGELLKPLNSEYGKVAPGWGTTPLMGVAMALFAVFLSIILEIYNSSVLLDGISLN</sequence>
<reference key="1">
    <citation type="journal article" date="2006" name="BMC Evol. Biol.">
        <title>Phylogenetic analyses of Vitis (Vitaceae) based on complete chloroplast genome sequences: effects of taxon sampling and phylogenetic methods on resolving relationships among rosids.</title>
        <authorList>
            <person name="Jansen R.K."/>
            <person name="Kaittanis C."/>
            <person name="Lee S.-B."/>
            <person name="Saski C."/>
            <person name="Tomkins J."/>
            <person name="Alverson A.J."/>
            <person name="Daniell H."/>
        </authorList>
    </citation>
    <scope>NUCLEOTIDE SEQUENCE [LARGE SCALE GENOMIC DNA]</scope>
    <source>
        <strain>cv. Maxxa</strain>
    </source>
</reference>
<proteinExistence type="inferred from homology"/>
<comment type="function">
    <text evidence="2">One of the components of the core complex of photosystem II (PSII), required for its stability and/or assembly. PSII is a light-driven water:plastoquinone oxidoreductase that uses light energy to abstract electrons from H(2)O, generating O(2) and a proton gradient subsequently used for ATP formation. It consists of a core antenna complex that captures photons, and an electron transfer chain that converts photonic excitation into a charge separation.</text>
</comment>
<comment type="subunit">
    <text evidence="2">PSII is composed of 1 copy each of membrane proteins PsbA, PsbB, PsbC, PsbD, PsbE, PsbF, PsbH, PsbI, PsbJ, PsbK, PsbL, PsbM, PsbT, PsbX, PsbY, PsbZ, Psb30/Ycf12, at least 3 peripheral proteins of the oxygen-evolving complex and a large number of cofactors. It forms dimeric complexes.</text>
</comment>
<comment type="subcellular location">
    <subcellularLocation>
        <location evidence="2">Plastid</location>
        <location evidence="2">Chloroplast thylakoid membrane</location>
        <topology evidence="2">Single-pass membrane protein</topology>
    </subcellularLocation>
</comment>
<comment type="PTM">
    <text evidence="2">Phosphorylation is a light-dependent reaction catalyzed by a membrane-bound kinase; phosphorylation occurs on Thr residue(s) in the N-terminus of the protein.</text>
</comment>
<comment type="similarity">
    <text evidence="2">Belongs to the PsbH family.</text>
</comment>
<comment type="sequence caution" evidence="4">
    <conflict type="erroneous initiation">
        <sequence resource="EMBL-CDS" id="ABE47562"/>
    </conflict>
    <text>Extended N-terminus.</text>
</comment>
<keyword id="KW-0150">Chloroplast</keyword>
<keyword id="KW-0472">Membrane</keyword>
<keyword id="KW-0597">Phosphoprotein</keyword>
<keyword id="KW-0602">Photosynthesis</keyword>
<keyword id="KW-0604">Photosystem II</keyword>
<keyword id="KW-0934">Plastid</keyword>
<keyword id="KW-1185">Reference proteome</keyword>
<keyword id="KW-0793">Thylakoid</keyword>
<keyword id="KW-0812">Transmembrane</keyword>
<keyword id="KW-1133">Transmembrane helix</keyword>
<geneLocation type="chloroplast"/>
<dbReference type="EMBL" id="DQ424856">
    <property type="protein sequence ID" value="ABE47562.1"/>
    <property type="status" value="ALT_INIT"/>
    <property type="molecule type" value="Genomic_DNA"/>
</dbReference>
<dbReference type="RefSeq" id="YP_567106.1">
    <property type="nucleotide sequence ID" value="NC_007957.1"/>
</dbReference>
<dbReference type="SMR" id="Q0ZIZ0"/>
<dbReference type="FunCoup" id="Q0ZIZ0">
    <property type="interactions" value="370"/>
</dbReference>
<dbReference type="STRING" id="29760.Q0ZIZ0"/>
<dbReference type="GeneID" id="4025128"/>
<dbReference type="KEGG" id="vvi:4025128"/>
<dbReference type="InParanoid" id="Q0ZIZ0"/>
<dbReference type="OrthoDB" id="684127at71240"/>
<dbReference type="Proteomes" id="UP000009183">
    <property type="component" value="Chloroplast"/>
</dbReference>
<dbReference type="GO" id="GO:0009535">
    <property type="term" value="C:chloroplast thylakoid membrane"/>
    <property type="evidence" value="ECO:0007669"/>
    <property type="project" value="UniProtKB-SubCell"/>
</dbReference>
<dbReference type="GO" id="GO:0009523">
    <property type="term" value="C:photosystem II"/>
    <property type="evidence" value="ECO:0007669"/>
    <property type="project" value="UniProtKB-KW"/>
</dbReference>
<dbReference type="GO" id="GO:0042301">
    <property type="term" value="F:phosphate ion binding"/>
    <property type="evidence" value="ECO:0007669"/>
    <property type="project" value="InterPro"/>
</dbReference>
<dbReference type="GO" id="GO:0015979">
    <property type="term" value="P:photosynthesis"/>
    <property type="evidence" value="ECO:0007669"/>
    <property type="project" value="UniProtKB-UniRule"/>
</dbReference>
<dbReference type="GO" id="GO:0050821">
    <property type="term" value="P:protein stabilization"/>
    <property type="evidence" value="ECO:0007669"/>
    <property type="project" value="InterPro"/>
</dbReference>
<dbReference type="FunFam" id="1.20.5.880:FF:000001">
    <property type="entry name" value="Photosystem II reaction center protein H"/>
    <property type="match status" value="1"/>
</dbReference>
<dbReference type="Gene3D" id="1.20.5.880">
    <property type="entry name" value="Photosystem II reaction center protein H"/>
    <property type="match status" value="1"/>
</dbReference>
<dbReference type="HAMAP" id="MF_00752">
    <property type="entry name" value="PSII_PsbH"/>
    <property type="match status" value="1"/>
</dbReference>
<dbReference type="InterPro" id="IPR001056">
    <property type="entry name" value="PSII_PsbH"/>
</dbReference>
<dbReference type="InterPro" id="IPR036863">
    <property type="entry name" value="PSII_PsbH_sf"/>
</dbReference>
<dbReference type="NCBIfam" id="NF002728">
    <property type="entry name" value="PRK02624.1"/>
    <property type="match status" value="1"/>
</dbReference>
<dbReference type="PANTHER" id="PTHR34469">
    <property type="entry name" value="PHOTOSYSTEM II REACTION CENTER PROTEIN H"/>
    <property type="match status" value="1"/>
</dbReference>
<dbReference type="PANTHER" id="PTHR34469:SF4">
    <property type="entry name" value="PHOTOSYSTEM II REACTION CENTER PROTEIN H"/>
    <property type="match status" value="1"/>
</dbReference>
<dbReference type="Pfam" id="PF00737">
    <property type="entry name" value="PsbH"/>
    <property type="match status" value="1"/>
</dbReference>
<dbReference type="SUPFAM" id="SSF161025">
    <property type="entry name" value="Photosystem II 10 kDa phosphoprotein PsbH"/>
    <property type="match status" value="1"/>
</dbReference>
<evidence type="ECO:0000250" key="1">
    <source>
        <dbReference type="UniProtKB" id="P56780"/>
    </source>
</evidence>
<evidence type="ECO:0000255" key="2">
    <source>
        <dbReference type="HAMAP-Rule" id="MF_00752"/>
    </source>
</evidence>
<evidence type="ECO:0000256" key="3">
    <source>
        <dbReference type="SAM" id="MobiDB-lite"/>
    </source>
</evidence>
<evidence type="ECO:0000305" key="4"/>
<feature type="initiator methionine" description="Removed" evidence="1">
    <location>
        <position position="1"/>
    </location>
</feature>
<feature type="chain" id="PRO_0000275778" description="Photosystem II reaction center protein H">
    <location>
        <begin position="2"/>
        <end position="73"/>
    </location>
</feature>
<feature type="transmembrane region" description="Helical" evidence="2">
    <location>
        <begin position="41"/>
        <end position="61"/>
    </location>
</feature>
<feature type="region of interest" description="Disordered" evidence="3">
    <location>
        <begin position="1"/>
        <end position="20"/>
    </location>
</feature>
<feature type="compositionally biased region" description="Polar residues" evidence="3">
    <location>
        <begin position="1"/>
        <end position="11"/>
    </location>
</feature>
<feature type="modified residue" description="Phosphothreonine" evidence="2">
    <location>
        <position position="3"/>
    </location>
</feature>
<feature type="modified residue" description="Phosphothreonine" evidence="2">
    <location>
        <position position="5"/>
    </location>
</feature>